<gene>
    <name evidence="1" type="primary">rpsU</name>
    <name type="ordered locus">MGAS10750_Spy0682</name>
</gene>
<name>RS21_STRPF</name>
<feature type="chain" id="PRO_0000266781" description="Small ribosomal subunit protein bS21">
    <location>
        <begin position="1"/>
        <end position="58"/>
    </location>
</feature>
<feature type="region of interest" description="Disordered" evidence="2">
    <location>
        <begin position="36"/>
        <end position="58"/>
    </location>
</feature>
<feature type="compositionally biased region" description="Basic residues" evidence="2">
    <location>
        <begin position="43"/>
        <end position="58"/>
    </location>
</feature>
<organism>
    <name type="scientific">Streptococcus pyogenes serotype M4 (strain MGAS10750)</name>
    <dbReference type="NCBI Taxonomy" id="370554"/>
    <lineage>
        <taxon>Bacteria</taxon>
        <taxon>Bacillati</taxon>
        <taxon>Bacillota</taxon>
        <taxon>Bacilli</taxon>
        <taxon>Lactobacillales</taxon>
        <taxon>Streptococcaceae</taxon>
        <taxon>Streptococcus</taxon>
    </lineage>
</organism>
<protein>
    <recommendedName>
        <fullName evidence="1">Small ribosomal subunit protein bS21</fullName>
    </recommendedName>
    <alternativeName>
        <fullName evidence="3">30S ribosomal protein S21</fullName>
    </alternativeName>
</protein>
<dbReference type="EMBL" id="CP000262">
    <property type="protein sequence ID" value="ABF37632.1"/>
    <property type="status" value="ALT_INIT"/>
    <property type="molecule type" value="Genomic_DNA"/>
</dbReference>
<dbReference type="SMR" id="Q1J7E2"/>
<dbReference type="KEGG" id="spi:MGAS10750_Spy0682"/>
<dbReference type="HOGENOM" id="CLU_159258_3_2_9"/>
<dbReference type="Proteomes" id="UP000002434">
    <property type="component" value="Chromosome"/>
</dbReference>
<dbReference type="GO" id="GO:1990904">
    <property type="term" value="C:ribonucleoprotein complex"/>
    <property type="evidence" value="ECO:0007669"/>
    <property type="project" value="UniProtKB-KW"/>
</dbReference>
<dbReference type="GO" id="GO:0005840">
    <property type="term" value="C:ribosome"/>
    <property type="evidence" value="ECO:0007669"/>
    <property type="project" value="UniProtKB-KW"/>
</dbReference>
<dbReference type="GO" id="GO:0003735">
    <property type="term" value="F:structural constituent of ribosome"/>
    <property type="evidence" value="ECO:0007669"/>
    <property type="project" value="InterPro"/>
</dbReference>
<dbReference type="GO" id="GO:0006412">
    <property type="term" value="P:translation"/>
    <property type="evidence" value="ECO:0007669"/>
    <property type="project" value="UniProtKB-UniRule"/>
</dbReference>
<dbReference type="Gene3D" id="1.20.5.1150">
    <property type="entry name" value="Ribosomal protein S8"/>
    <property type="match status" value="1"/>
</dbReference>
<dbReference type="HAMAP" id="MF_00358">
    <property type="entry name" value="Ribosomal_bS21"/>
    <property type="match status" value="1"/>
</dbReference>
<dbReference type="InterPro" id="IPR001911">
    <property type="entry name" value="Ribosomal_bS21"/>
</dbReference>
<dbReference type="InterPro" id="IPR018278">
    <property type="entry name" value="Ribosomal_bS21_CS"/>
</dbReference>
<dbReference type="InterPro" id="IPR038380">
    <property type="entry name" value="Ribosomal_bS21_sf"/>
</dbReference>
<dbReference type="NCBIfam" id="TIGR00030">
    <property type="entry name" value="S21p"/>
    <property type="match status" value="1"/>
</dbReference>
<dbReference type="PANTHER" id="PTHR21109">
    <property type="entry name" value="MITOCHONDRIAL 28S RIBOSOMAL PROTEIN S21"/>
    <property type="match status" value="1"/>
</dbReference>
<dbReference type="PANTHER" id="PTHR21109:SF22">
    <property type="entry name" value="SMALL RIBOSOMAL SUBUNIT PROTEIN BS21"/>
    <property type="match status" value="1"/>
</dbReference>
<dbReference type="Pfam" id="PF01165">
    <property type="entry name" value="Ribosomal_S21"/>
    <property type="match status" value="1"/>
</dbReference>
<dbReference type="PRINTS" id="PR00976">
    <property type="entry name" value="RIBOSOMALS21"/>
</dbReference>
<dbReference type="PROSITE" id="PS01181">
    <property type="entry name" value="RIBOSOMAL_S21"/>
    <property type="match status" value="1"/>
</dbReference>
<comment type="similarity">
    <text evidence="1">Belongs to the bacterial ribosomal protein bS21 family.</text>
</comment>
<comment type="sequence caution" evidence="3">
    <conflict type="erroneous initiation">
        <sequence resource="EMBL-CDS" id="ABF37632"/>
    </conflict>
</comment>
<accession>Q1J7E2</accession>
<evidence type="ECO:0000255" key="1">
    <source>
        <dbReference type="HAMAP-Rule" id="MF_00358"/>
    </source>
</evidence>
<evidence type="ECO:0000256" key="2">
    <source>
        <dbReference type="SAM" id="MobiDB-lite"/>
    </source>
</evidence>
<evidence type="ECO:0000305" key="3"/>
<reference key="1">
    <citation type="journal article" date="2006" name="Proc. Natl. Acad. Sci. U.S.A.">
        <title>Molecular genetic anatomy of inter- and intraserotype variation in the human bacterial pathogen group A Streptococcus.</title>
        <authorList>
            <person name="Beres S.B."/>
            <person name="Richter E.W."/>
            <person name="Nagiec M.J."/>
            <person name="Sumby P."/>
            <person name="Porcella S.F."/>
            <person name="DeLeo F.R."/>
            <person name="Musser J.M."/>
        </authorList>
    </citation>
    <scope>NUCLEOTIDE SEQUENCE [LARGE SCALE GENOMIC DNA]</scope>
    <source>
        <strain>MGAS10750</strain>
    </source>
</reference>
<sequence>MSKTVVRKNESLDDALRRFKRSVTKAGTLQESRKREFYEKPSVKRKRKSEAARKRKKF</sequence>
<proteinExistence type="inferred from homology"/>
<keyword id="KW-0687">Ribonucleoprotein</keyword>
<keyword id="KW-0689">Ribosomal protein</keyword>